<feature type="chain" id="PRO_0000216364" description="Cytochrome b6-f complex subunit 5">
    <location>
        <begin position="1"/>
        <end position="37"/>
    </location>
</feature>
<feature type="transmembrane region" description="Helical" evidence="1">
    <location>
        <begin position="5"/>
        <end position="25"/>
    </location>
</feature>
<proteinExistence type="inferred from homology"/>
<organism>
    <name type="scientific">Acorus gramineus</name>
    <name type="common">Dwarf sweet flag</name>
    <dbReference type="NCBI Taxonomy" id="55184"/>
    <lineage>
        <taxon>Eukaryota</taxon>
        <taxon>Viridiplantae</taxon>
        <taxon>Streptophyta</taxon>
        <taxon>Embryophyta</taxon>
        <taxon>Tracheophyta</taxon>
        <taxon>Spermatophyta</taxon>
        <taxon>Magnoliopsida</taxon>
        <taxon>Liliopsida</taxon>
        <taxon>Acoraceae</taxon>
        <taxon>Acorus</taxon>
    </lineage>
</organism>
<gene>
    <name evidence="1" type="primary">petG</name>
</gene>
<reference key="1">
    <citation type="journal article" date="2004" name="BMC Evol. Biol.">
        <title>Long branch attraction, taxon sampling, and the earliest angiosperms: Amborella or monocots?</title>
        <authorList>
            <person name="Stefanovic S."/>
            <person name="Rice D.W."/>
            <person name="Palmer J.D."/>
        </authorList>
    </citation>
    <scope>NUCLEOTIDE SEQUENCE [GENOMIC DNA]</scope>
</reference>
<protein>
    <recommendedName>
        <fullName evidence="1">Cytochrome b6-f complex subunit 5</fullName>
    </recommendedName>
    <alternativeName>
        <fullName evidence="1">Cytochrome b6-f complex subunit PetG</fullName>
    </alternativeName>
    <alternativeName>
        <fullName evidence="1">Cytochrome b6-f complex subunit V</fullName>
    </alternativeName>
</protein>
<name>PETG_ACOGR</name>
<evidence type="ECO:0000255" key="1">
    <source>
        <dbReference type="HAMAP-Rule" id="MF_00432"/>
    </source>
</evidence>
<comment type="function">
    <text evidence="1">Component of the cytochrome b6-f complex, which mediates electron transfer between photosystem II (PSII) and photosystem I (PSI), cyclic electron flow around PSI, and state transitions. PetG is required for either the stability or assembly of the cytochrome b6-f complex.</text>
</comment>
<comment type="subunit">
    <text evidence="1">The 4 large subunits of the cytochrome b6-f complex are cytochrome b6, subunit IV (17 kDa polypeptide, PetD), cytochrome f and the Rieske protein, while the 4 small subunits are PetG, PetL, PetM and PetN. The complex functions as a dimer.</text>
</comment>
<comment type="subcellular location">
    <subcellularLocation>
        <location evidence="1">Plastid</location>
        <location evidence="1">Chloroplast thylakoid membrane</location>
        <topology evidence="1">Single-pass membrane protein</topology>
    </subcellularLocation>
</comment>
<comment type="similarity">
    <text evidence="1">Belongs to the PetG family.</text>
</comment>
<dbReference type="EMBL" id="AY757815">
    <property type="protein sequence ID" value="AAV74354.1"/>
    <property type="molecule type" value="Genomic_DNA"/>
</dbReference>
<dbReference type="RefSeq" id="YP_009117693.1">
    <property type="nucleotide sequence ID" value="NC_026299.1"/>
</dbReference>
<dbReference type="SMR" id="Q5QA79"/>
<dbReference type="GeneID" id="22975411"/>
<dbReference type="GO" id="GO:0009535">
    <property type="term" value="C:chloroplast thylakoid membrane"/>
    <property type="evidence" value="ECO:0007669"/>
    <property type="project" value="UniProtKB-SubCell"/>
</dbReference>
<dbReference type="GO" id="GO:0009512">
    <property type="term" value="C:cytochrome b6f complex"/>
    <property type="evidence" value="ECO:0007669"/>
    <property type="project" value="InterPro"/>
</dbReference>
<dbReference type="GO" id="GO:0045158">
    <property type="term" value="F:electron transporter, transferring electrons within cytochrome b6/f complex of photosystem II activity"/>
    <property type="evidence" value="ECO:0007669"/>
    <property type="project" value="UniProtKB-UniRule"/>
</dbReference>
<dbReference type="GO" id="GO:0017004">
    <property type="term" value="P:cytochrome complex assembly"/>
    <property type="evidence" value="ECO:0007669"/>
    <property type="project" value="UniProtKB-UniRule"/>
</dbReference>
<dbReference type="GO" id="GO:0015979">
    <property type="term" value="P:photosynthesis"/>
    <property type="evidence" value="ECO:0007669"/>
    <property type="project" value="UniProtKB-KW"/>
</dbReference>
<dbReference type="HAMAP" id="MF_00432">
    <property type="entry name" value="Cytb6_f_PetG"/>
    <property type="match status" value="1"/>
</dbReference>
<dbReference type="InterPro" id="IPR003683">
    <property type="entry name" value="Cyt_6/f_cplx_su5"/>
</dbReference>
<dbReference type="InterPro" id="IPR036099">
    <property type="entry name" value="Cyt_6/f_cplx_su5_sf"/>
</dbReference>
<dbReference type="NCBIfam" id="NF001907">
    <property type="entry name" value="PRK00665.1"/>
    <property type="match status" value="1"/>
</dbReference>
<dbReference type="Pfam" id="PF02529">
    <property type="entry name" value="PetG"/>
    <property type="match status" value="1"/>
</dbReference>
<dbReference type="PIRSF" id="PIRSF000034">
    <property type="entry name" value="Cyt_b6-f_V"/>
    <property type="match status" value="1"/>
</dbReference>
<dbReference type="SUPFAM" id="SSF103446">
    <property type="entry name" value="PetG subunit of the cytochrome b6f complex"/>
    <property type="match status" value="1"/>
</dbReference>
<accession>Q5QA79</accession>
<geneLocation type="chloroplast"/>
<keyword id="KW-0150">Chloroplast</keyword>
<keyword id="KW-0249">Electron transport</keyword>
<keyword id="KW-0472">Membrane</keyword>
<keyword id="KW-0602">Photosynthesis</keyword>
<keyword id="KW-0934">Plastid</keyword>
<keyword id="KW-0793">Thylakoid</keyword>
<keyword id="KW-0812">Transmembrane</keyword>
<keyword id="KW-1133">Transmembrane helix</keyword>
<keyword id="KW-0813">Transport</keyword>
<sequence length="37" mass="4170">MIEVFLFGIVLGLIPITLAGLFVTAYLQYRRGDQLDL</sequence>